<keyword id="KW-0004">4Fe-4S</keyword>
<keyword id="KW-0249">Electron transport</keyword>
<keyword id="KW-0408">Iron</keyword>
<keyword id="KW-0411">Iron-sulfur</keyword>
<keyword id="KW-0479">Metal-binding</keyword>
<keyword id="KW-0500">Molybdenum</keyword>
<keyword id="KW-0534">Nitrate assimilation</keyword>
<keyword id="KW-0560">Oxidoreductase</keyword>
<keyword id="KW-0574">Periplasm</keyword>
<keyword id="KW-0732">Signal</keyword>
<keyword id="KW-0813">Transport</keyword>
<proteinExistence type="inferred from homology"/>
<gene>
    <name evidence="1" type="primary">napA</name>
    <name type="ordered locus">CFF8240_1161</name>
</gene>
<protein>
    <recommendedName>
        <fullName evidence="1">Periplasmic nitrate reductase</fullName>
        <ecNumber evidence="1">1.9.6.1</ecNumber>
    </recommendedName>
</protein>
<comment type="function">
    <text evidence="1">Catalytic subunit of the periplasmic nitrate reductase complex NapAB. Receives electrons from NapB and catalyzes the reduction of nitrate to nitrite.</text>
</comment>
<comment type="catalytic activity">
    <reaction evidence="1">
        <text>2 Fe(II)-[cytochrome] + nitrate + 2 H(+) = 2 Fe(III)-[cytochrome] + nitrite + H2O</text>
        <dbReference type="Rhea" id="RHEA:12909"/>
        <dbReference type="Rhea" id="RHEA-COMP:11777"/>
        <dbReference type="Rhea" id="RHEA-COMP:11778"/>
        <dbReference type="ChEBI" id="CHEBI:15377"/>
        <dbReference type="ChEBI" id="CHEBI:15378"/>
        <dbReference type="ChEBI" id="CHEBI:16301"/>
        <dbReference type="ChEBI" id="CHEBI:17632"/>
        <dbReference type="ChEBI" id="CHEBI:29033"/>
        <dbReference type="ChEBI" id="CHEBI:29034"/>
        <dbReference type="EC" id="1.9.6.1"/>
    </reaction>
</comment>
<comment type="cofactor">
    <cofactor evidence="1">
        <name>[4Fe-4S] cluster</name>
        <dbReference type="ChEBI" id="CHEBI:49883"/>
    </cofactor>
    <text evidence="1">Binds 1 [4Fe-4S] cluster.</text>
</comment>
<comment type="cofactor">
    <cofactor evidence="1">
        <name>Mo-bis(molybdopterin guanine dinucleotide)</name>
        <dbReference type="ChEBI" id="CHEBI:60539"/>
    </cofactor>
    <text evidence="1">Binds 1 molybdenum-bis(molybdopterin guanine dinucleotide) (Mo-bis-MGD) cofactor per subunit.</text>
</comment>
<comment type="subunit">
    <text evidence="1">Component of the periplasmic nitrate reductase NapAB complex composed of NapA and NapB.</text>
</comment>
<comment type="subcellular location">
    <subcellularLocation>
        <location evidence="1">Periplasm</location>
    </subcellularLocation>
</comment>
<comment type="PTM">
    <text evidence="1">Predicted to be exported by the Tat system. The position of the signal peptide cleavage has not been experimentally proven.</text>
</comment>
<comment type="similarity">
    <text evidence="1">Belongs to the prokaryotic molybdopterin-containing oxidoreductase family. NasA/NapA/NarB subfamily.</text>
</comment>
<dbReference type="EC" id="1.9.6.1" evidence="1"/>
<dbReference type="EMBL" id="CP000487">
    <property type="protein sequence ID" value="ABK82549.1"/>
    <property type="molecule type" value="Genomic_DNA"/>
</dbReference>
<dbReference type="RefSeq" id="WP_011732100.1">
    <property type="nucleotide sequence ID" value="NC_008599.1"/>
</dbReference>
<dbReference type="SMR" id="A0RQ36"/>
<dbReference type="GeneID" id="61064986"/>
<dbReference type="KEGG" id="cff:CFF8240_1161"/>
<dbReference type="eggNOG" id="COG0243">
    <property type="taxonomic scope" value="Bacteria"/>
</dbReference>
<dbReference type="HOGENOM" id="CLU_000422_13_4_7"/>
<dbReference type="Proteomes" id="UP000000760">
    <property type="component" value="Chromosome"/>
</dbReference>
<dbReference type="GO" id="GO:0016020">
    <property type="term" value="C:membrane"/>
    <property type="evidence" value="ECO:0007669"/>
    <property type="project" value="TreeGrafter"/>
</dbReference>
<dbReference type="GO" id="GO:0009325">
    <property type="term" value="C:nitrate reductase complex"/>
    <property type="evidence" value="ECO:0007669"/>
    <property type="project" value="TreeGrafter"/>
</dbReference>
<dbReference type="GO" id="GO:0042597">
    <property type="term" value="C:periplasmic space"/>
    <property type="evidence" value="ECO:0007669"/>
    <property type="project" value="UniProtKB-SubCell"/>
</dbReference>
<dbReference type="GO" id="GO:0051539">
    <property type="term" value="F:4 iron, 4 sulfur cluster binding"/>
    <property type="evidence" value="ECO:0007669"/>
    <property type="project" value="UniProtKB-KW"/>
</dbReference>
<dbReference type="GO" id="GO:0009055">
    <property type="term" value="F:electron transfer activity"/>
    <property type="evidence" value="ECO:0007669"/>
    <property type="project" value="UniProtKB-UniRule"/>
</dbReference>
<dbReference type="GO" id="GO:0005506">
    <property type="term" value="F:iron ion binding"/>
    <property type="evidence" value="ECO:0007669"/>
    <property type="project" value="UniProtKB-UniRule"/>
</dbReference>
<dbReference type="GO" id="GO:0030151">
    <property type="term" value="F:molybdenum ion binding"/>
    <property type="evidence" value="ECO:0007669"/>
    <property type="project" value="InterPro"/>
</dbReference>
<dbReference type="GO" id="GO:0043546">
    <property type="term" value="F:molybdopterin cofactor binding"/>
    <property type="evidence" value="ECO:0007669"/>
    <property type="project" value="InterPro"/>
</dbReference>
<dbReference type="GO" id="GO:0050140">
    <property type="term" value="F:nitrate reductase (cytochrome) activity"/>
    <property type="evidence" value="ECO:0007669"/>
    <property type="project" value="UniProtKB-EC"/>
</dbReference>
<dbReference type="GO" id="GO:0006777">
    <property type="term" value="P:Mo-molybdopterin cofactor biosynthetic process"/>
    <property type="evidence" value="ECO:0007669"/>
    <property type="project" value="UniProtKB-UniRule"/>
</dbReference>
<dbReference type="GO" id="GO:0042128">
    <property type="term" value="P:nitrate assimilation"/>
    <property type="evidence" value="ECO:0007669"/>
    <property type="project" value="UniProtKB-UniRule"/>
</dbReference>
<dbReference type="CDD" id="cd02791">
    <property type="entry name" value="MopB_CT_Nitrate-R-NapA-like"/>
    <property type="match status" value="1"/>
</dbReference>
<dbReference type="FunFam" id="2.40.40.20:FF:000005">
    <property type="entry name" value="Periplasmic nitrate reductase"/>
    <property type="match status" value="1"/>
</dbReference>
<dbReference type="Gene3D" id="2.40.40.20">
    <property type="match status" value="1"/>
</dbReference>
<dbReference type="Gene3D" id="3.30.200.210">
    <property type="match status" value="1"/>
</dbReference>
<dbReference type="Gene3D" id="3.40.50.740">
    <property type="match status" value="2"/>
</dbReference>
<dbReference type="Gene3D" id="2.20.25.90">
    <property type="entry name" value="ADC-like domains"/>
    <property type="match status" value="1"/>
</dbReference>
<dbReference type="Gene3D" id="3.40.228.10">
    <property type="entry name" value="Dimethylsulfoxide Reductase, domain 2"/>
    <property type="match status" value="2"/>
</dbReference>
<dbReference type="HAMAP" id="MF_01630">
    <property type="entry name" value="Nitrate_reduct_NapA"/>
    <property type="match status" value="1"/>
</dbReference>
<dbReference type="InterPro" id="IPR009010">
    <property type="entry name" value="Asp_de-COase-like_dom_sf"/>
</dbReference>
<dbReference type="InterPro" id="IPR041957">
    <property type="entry name" value="CT_Nitrate-R-NapA-like"/>
</dbReference>
<dbReference type="InterPro" id="IPR006657">
    <property type="entry name" value="MoPterin_dinucl-bd_dom"/>
</dbReference>
<dbReference type="InterPro" id="IPR006656">
    <property type="entry name" value="Mopterin_OxRdtase"/>
</dbReference>
<dbReference type="InterPro" id="IPR006963">
    <property type="entry name" value="Mopterin_OxRdtase_4Fe-4S_dom"/>
</dbReference>
<dbReference type="InterPro" id="IPR027467">
    <property type="entry name" value="MopterinOxRdtase_cofactor_BS"/>
</dbReference>
<dbReference type="InterPro" id="IPR010051">
    <property type="entry name" value="Periplasm_NO3_reductase_lsu"/>
</dbReference>
<dbReference type="InterPro" id="IPR050123">
    <property type="entry name" value="Prok_molybdopt-oxidoreductase"/>
</dbReference>
<dbReference type="InterPro" id="IPR006311">
    <property type="entry name" value="TAT_signal"/>
</dbReference>
<dbReference type="NCBIfam" id="TIGR01706">
    <property type="entry name" value="NAPA"/>
    <property type="match status" value="1"/>
</dbReference>
<dbReference type="NCBIfam" id="NF010055">
    <property type="entry name" value="PRK13532.1"/>
    <property type="match status" value="1"/>
</dbReference>
<dbReference type="PANTHER" id="PTHR43105:SF11">
    <property type="entry name" value="PERIPLASMIC NITRATE REDUCTASE"/>
    <property type="match status" value="1"/>
</dbReference>
<dbReference type="PANTHER" id="PTHR43105">
    <property type="entry name" value="RESPIRATORY NITRATE REDUCTASE"/>
    <property type="match status" value="1"/>
</dbReference>
<dbReference type="Pfam" id="PF04879">
    <property type="entry name" value="Molybdop_Fe4S4"/>
    <property type="match status" value="1"/>
</dbReference>
<dbReference type="Pfam" id="PF00384">
    <property type="entry name" value="Molybdopterin"/>
    <property type="match status" value="1"/>
</dbReference>
<dbReference type="Pfam" id="PF01568">
    <property type="entry name" value="Molydop_binding"/>
    <property type="match status" value="1"/>
</dbReference>
<dbReference type="SMART" id="SM00926">
    <property type="entry name" value="Molybdop_Fe4S4"/>
    <property type="match status" value="1"/>
</dbReference>
<dbReference type="SUPFAM" id="SSF50692">
    <property type="entry name" value="ADC-like"/>
    <property type="match status" value="1"/>
</dbReference>
<dbReference type="SUPFAM" id="SSF53706">
    <property type="entry name" value="Formate dehydrogenase/DMSO reductase, domains 1-3"/>
    <property type="match status" value="1"/>
</dbReference>
<dbReference type="PROSITE" id="PS51669">
    <property type="entry name" value="4FE4S_MOW_BIS_MGD"/>
    <property type="match status" value="1"/>
</dbReference>
<dbReference type="PROSITE" id="PS00551">
    <property type="entry name" value="MOLYBDOPTERIN_PROK_1"/>
    <property type="match status" value="1"/>
</dbReference>
<dbReference type="PROSITE" id="PS51318">
    <property type="entry name" value="TAT"/>
    <property type="match status" value="1"/>
</dbReference>
<evidence type="ECO:0000255" key="1">
    <source>
        <dbReference type="HAMAP-Rule" id="MF_01630"/>
    </source>
</evidence>
<organism>
    <name type="scientific">Campylobacter fetus subsp. fetus (strain 82-40)</name>
    <dbReference type="NCBI Taxonomy" id="360106"/>
    <lineage>
        <taxon>Bacteria</taxon>
        <taxon>Pseudomonadati</taxon>
        <taxon>Campylobacterota</taxon>
        <taxon>Epsilonproteobacteria</taxon>
        <taxon>Campylobacterales</taxon>
        <taxon>Campylobacteraceae</taxon>
        <taxon>Campylobacter</taxon>
    </lineage>
</organism>
<feature type="signal peptide" description="Tat-type signal" evidence="1">
    <location>
        <begin position="1"/>
        <end position="30"/>
    </location>
</feature>
<feature type="chain" id="PRO_1000069712" description="Periplasmic nitrate reductase" evidence="1">
    <location>
        <begin position="31"/>
        <end position="925"/>
    </location>
</feature>
<feature type="domain" description="4Fe-4S Mo/W bis-MGD-type" evidence="1">
    <location>
        <begin position="36"/>
        <end position="92"/>
    </location>
</feature>
<feature type="binding site" evidence="1">
    <location>
        <position position="43"/>
    </location>
    <ligand>
        <name>[4Fe-4S] cluster</name>
        <dbReference type="ChEBI" id="CHEBI:49883"/>
    </ligand>
</feature>
<feature type="binding site" evidence="1">
    <location>
        <position position="46"/>
    </location>
    <ligand>
        <name>[4Fe-4S] cluster</name>
        <dbReference type="ChEBI" id="CHEBI:49883"/>
    </ligand>
</feature>
<feature type="binding site" evidence="1">
    <location>
        <position position="50"/>
    </location>
    <ligand>
        <name>[4Fe-4S] cluster</name>
        <dbReference type="ChEBI" id="CHEBI:49883"/>
    </ligand>
</feature>
<feature type="binding site" evidence="1">
    <location>
        <position position="78"/>
    </location>
    <ligand>
        <name>[4Fe-4S] cluster</name>
        <dbReference type="ChEBI" id="CHEBI:49883"/>
    </ligand>
</feature>
<feature type="binding site" evidence="1">
    <location>
        <position position="80"/>
    </location>
    <ligand>
        <name>Mo-bis(molybdopterin guanine dinucleotide)</name>
        <dbReference type="ChEBI" id="CHEBI:60539"/>
    </ligand>
</feature>
<feature type="binding site" evidence="1">
    <location>
        <position position="148"/>
    </location>
    <ligand>
        <name>Mo-bis(molybdopterin guanine dinucleotide)</name>
        <dbReference type="ChEBI" id="CHEBI:60539"/>
    </ligand>
</feature>
<feature type="binding site" evidence="1">
    <location>
        <position position="173"/>
    </location>
    <ligand>
        <name>Mo-bis(molybdopterin guanine dinucleotide)</name>
        <dbReference type="ChEBI" id="CHEBI:60539"/>
    </ligand>
</feature>
<feature type="binding site" evidence="1">
    <location>
        <position position="177"/>
    </location>
    <ligand>
        <name>Mo-bis(molybdopterin guanine dinucleotide)</name>
        <dbReference type="ChEBI" id="CHEBI:60539"/>
    </ligand>
</feature>
<feature type="binding site" evidence="1">
    <location>
        <begin position="210"/>
        <end position="217"/>
    </location>
    <ligand>
        <name>Mo-bis(molybdopterin guanine dinucleotide)</name>
        <dbReference type="ChEBI" id="CHEBI:60539"/>
    </ligand>
</feature>
<feature type="binding site" evidence="1">
    <location>
        <position position="418"/>
    </location>
    <ligand>
        <name>Mo-bis(molybdopterin guanine dinucleotide)</name>
        <dbReference type="ChEBI" id="CHEBI:60539"/>
    </ligand>
</feature>
<feature type="binding site" evidence="1">
    <location>
        <position position="422"/>
    </location>
    <ligand>
        <name>Mo-bis(molybdopterin guanine dinucleotide)</name>
        <dbReference type="ChEBI" id="CHEBI:60539"/>
    </ligand>
</feature>
<feature type="binding site" evidence="1">
    <location>
        <position position="528"/>
    </location>
    <ligand>
        <name>Mo-bis(molybdopterin guanine dinucleotide)</name>
        <dbReference type="ChEBI" id="CHEBI:60539"/>
    </ligand>
</feature>
<feature type="binding site" evidence="1">
    <location>
        <begin position="553"/>
        <end position="554"/>
    </location>
    <ligand>
        <name>Mo-bis(molybdopterin guanine dinucleotide)</name>
        <dbReference type="ChEBI" id="CHEBI:60539"/>
    </ligand>
</feature>
<feature type="binding site" evidence="1">
    <location>
        <position position="576"/>
    </location>
    <ligand>
        <name>Mo-bis(molybdopterin guanine dinucleotide)</name>
        <dbReference type="ChEBI" id="CHEBI:60539"/>
    </ligand>
</feature>
<feature type="binding site" evidence="1">
    <location>
        <position position="603"/>
    </location>
    <ligand>
        <name>Mo-bis(molybdopterin guanine dinucleotide)</name>
        <dbReference type="ChEBI" id="CHEBI:60539"/>
    </ligand>
</feature>
<feature type="binding site" evidence="1">
    <location>
        <begin position="815"/>
        <end position="824"/>
    </location>
    <ligand>
        <name>Mo-bis(molybdopterin guanine dinucleotide)</name>
        <dbReference type="ChEBI" id="CHEBI:60539"/>
    </ligand>
</feature>
<feature type="binding site" evidence="1">
    <location>
        <position position="891"/>
    </location>
    <ligand>
        <name>substrate</name>
    </ligand>
</feature>
<feature type="binding site" evidence="1">
    <location>
        <position position="899"/>
    </location>
    <ligand>
        <name>Mo-bis(molybdopterin guanine dinucleotide)</name>
        <dbReference type="ChEBI" id="CHEBI:60539"/>
    </ligand>
</feature>
<feature type="binding site" evidence="1">
    <location>
        <position position="916"/>
    </location>
    <ligand>
        <name>Mo-bis(molybdopterin guanine dinucleotide)</name>
        <dbReference type="ChEBI" id="CHEBI:60539"/>
    </ligand>
</feature>
<name>NAPA_CAMFF</name>
<accession>A0RQ36</accession>
<sequence>MDRREFIKSSAAAAACSAAGIAVPSSLSAAENQDGWRWDKSACRFCGTGCGIMVATKNGKIVAVKGDPLAPVNRGLNCIKGYFNAKIMYGEDRITKPLLRVNANGEFDKKGKFQEVSWKRAFDEMEKQFRKTYAELGPTGIGVFGSGQYTIQEGYAISKLIKGGFRSHNIDPNARHCMASAVVGFMQTFGIDEPAGCYDDIELTDTIVTWGANMAEMHPILWSRVSDRKLQNSDKVKVVNLSTYSTRTSNIADIEIIFTPHTDLAIWNYIAREIVYNHPEAIDEEFVKANCVFTTGPVDIGYGMRANIKHPKYLPSELDTAAKEKSTVLSENEGVTLAYLGMKAGDTLENKSTGAPDKHWIIQYEDFKKALAPYTLDFVAKLAKGDPNEDLEEFKKKLKALADLYIEKNRKVVSFWTMGMNQHTRGVWVNEQSYMVHFLLGKQAKPGSGAFSLTGQPSACGTAREVGTFSHRLPADMVVANPKHREITEKIWKIPAGTINPKPGAPYMKIMRDLEDGKVKFVWVHVNNPWQNSANANHWIKAAREMDNFIVVSDPYPGISAKVGDLILPTAMIYEKWGAYGNAERRTQHWRQQVLPVGDAMSDTWQYMEFAKRFKLKDFWGEVKVDGKLTLPNVLDKAVAMGYNPENTLFEVLFANKSAMKFSSDDKIMAGYDNTEVFGDSRNVVGSDGNVFKGYGFFVQKYLWEEYREFGLGHGHDLADFDTYHKVRGLRWPVVDGKETLWRFNTKYDVYAKKDNPNGDFSFYGNKNGALVTGDLAKATSKEKEALKSRAKIFFRPYMDPPEMPSKDYPLWLCTGRVLEHWHSGTMTMRVPELYRAVPEALCFMNEIDGNKFGIKQNDIIWVESRRGKVKARVDFRGRNKPAEGLIYVPWFDENVFINKVCLDATDPLSKQTDFKKCAVKIYKA</sequence>
<reference key="1">
    <citation type="submission" date="2006-11" db="EMBL/GenBank/DDBJ databases">
        <title>Sequence of Campylobacter fetus subsp. fetus 82-40.</title>
        <authorList>
            <person name="Fouts D.E."/>
            <person name="Nelson K.E."/>
        </authorList>
    </citation>
    <scope>NUCLEOTIDE SEQUENCE [LARGE SCALE GENOMIC DNA]</scope>
    <source>
        <strain>82-40</strain>
    </source>
</reference>